<comment type="function">
    <text evidence="1">Catalyzes the first step in hexosamine metabolism, converting fructose-6P into glucosamine-6P using glutamine as a nitrogen source.</text>
</comment>
<comment type="catalytic activity">
    <reaction evidence="1">
        <text>D-fructose 6-phosphate + L-glutamine = D-glucosamine 6-phosphate + L-glutamate</text>
        <dbReference type="Rhea" id="RHEA:13237"/>
        <dbReference type="ChEBI" id="CHEBI:29985"/>
        <dbReference type="ChEBI" id="CHEBI:58359"/>
        <dbReference type="ChEBI" id="CHEBI:58725"/>
        <dbReference type="ChEBI" id="CHEBI:61527"/>
        <dbReference type="EC" id="2.6.1.16"/>
    </reaction>
</comment>
<comment type="subunit">
    <text evidence="1">Homodimer.</text>
</comment>
<comment type="subcellular location">
    <subcellularLocation>
        <location evidence="1">Cytoplasm</location>
    </subcellularLocation>
</comment>
<protein>
    <recommendedName>
        <fullName evidence="1">Glutamine--fructose-6-phosphate aminotransferase [isomerizing]</fullName>
        <ecNumber evidence="1">2.6.1.16</ecNumber>
    </recommendedName>
    <alternativeName>
        <fullName evidence="1">D-fructose-6-phosphate amidotransferase</fullName>
    </alternativeName>
    <alternativeName>
        <fullName evidence="1">GFAT</fullName>
    </alternativeName>
    <alternativeName>
        <fullName evidence="1">Glucosamine-6-phosphate synthase</fullName>
    </alternativeName>
    <alternativeName>
        <fullName evidence="1">Hexosephosphate aminotransferase</fullName>
    </alternativeName>
    <alternativeName>
        <fullName evidence="1">L-glutamine--D-fructose-6-phosphate amidotransferase</fullName>
    </alternativeName>
</protein>
<accession>Q6AD32</accession>
<proteinExistence type="inferred from homology"/>
<evidence type="ECO:0000255" key="1">
    <source>
        <dbReference type="HAMAP-Rule" id="MF_00164"/>
    </source>
</evidence>
<keyword id="KW-0032">Aminotransferase</keyword>
<keyword id="KW-0963">Cytoplasm</keyword>
<keyword id="KW-0315">Glutamine amidotransferase</keyword>
<keyword id="KW-1185">Reference proteome</keyword>
<keyword id="KW-0677">Repeat</keyword>
<keyword id="KW-0808">Transferase</keyword>
<gene>
    <name evidence="1" type="primary">glmS</name>
    <name type="ordered locus">Lxx19980</name>
</gene>
<dbReference type="EC" id="2.6.1.16" evidence="1"/>
<dbReference type="EMBL" id="AE016822">
    <property type="protein sequence ID" value="AAT89712.1"/>
    <property type="molecule type" value="Genomic_DNA"/>
</dbReference>
<dbReference type="RefSeq" id="WP_011186698.1">
    <property type="nucleotide sequence ID" value="NC_006087.1"/>
</dbReference>
<dbReference type="SMR" id="Q6AD32"/>
<dbReference type="STRING" id="281090.Lxx19980"/>
<dbReference type="KEGG" id="lxx:Lxx19980"/>
<dbReference type="eggNOG" id="COG0449">
    <property type="taxonomic scope" value="Bacteria"/>
</dbReference>
<dbReference type="HOGENOM" id="CLU_012520_5_2_11"/>
<dbReference type="Proteomes" id="UP000001306">
    <property type="component" value="Chromosome"/>
</dbReference>
<dbReference type="GO" id="GO:0005829">
    <property type="term" value="C:cytosol"/>
    <property type="evidence" value="ECO:0007669"/>
    <property type="project" value="TreeGrafter"/>
</dbReference>
<dbReference type="GO" id="GO:0097367">
    <property type="term" value="F:carbohydrate derivative binding"/>
    <property type="evidence" value="ECO:0007669"/>
    <property type="project" value="InterPro"/>
</dbReference>
<dbReference type="GO" id="GO:0004360">
    <property type="term" value="F:glutamine-fructose-6-phosphate transaminase (isomerizing) activity"/>
    <property type="evidence" value="ECO:0007669"/>
    <property type="project" value="UniProtKB-UniRule"/>
</dbReference>
<dbReference type="GO" id="GO:0005975">
    <property type="term" value="P:carbohydrate metabolic process"/>
    <property type="evidence" value="ECO:0007669"/>
    <property type="project" value="UniProtKB-UniRule"/>
</dbReference>
<dbReference type="GO" id="GO:0006002">
    <property type="term" value="P:fructose 6-phosphate metabolic process"/>
    <property type="evidence" value="ECO:0007669"/>
    <property type="project" value="TreeGrafter"/>
</dbReference>
<dbReference type="GO" id="GO:0006487">
    <property type="term" value="P:protein N-linked glycosylation"/>
    <property type="evidence" value="ECO:0007669"/>
    <property type="project" value="TreeGrafter"/>
</dbReference>
<dbReference type="GO" id="GO:0006047">
    <property type="term" value="P:UDP-N-acetylglucosamine metabolic process"/>
    <property type="evidence" value="ECO:0007669"/>
    <property type="project" value="TreeGrafter"/>
</dbReference>
<dbReference type="CDD" id="cd00714">
    <property type="entry name" value="GFAT"/>
    <property type="match status" value="1"/>
</dbReference>
<dbReference type="CDD" id="cd05008">
    <property type="entry name" value="SIS_GlmS_GlmD_1"/>
    <property type="match status" value="1"/>
</dbReference>
<dbReference type="CDD" id="cd05009">
    <property type="entry name" value="SIS_GlmS_GlmD_2"/>
    <property type="match status" value="1"/>
</dbReference>
<dbReference type="FunFam" id="3.40.50.10490:FF:000001">
    <property type="entry name" value="Glutamine--fructose-6-phosphate aminotransferase [isomerizing]"/>
    <property type="match status" value="1"/>
</dbReference>
<dbReference type="FunFam" id="3.60.20.10:FF:000006">
    <property type="entry name" value="Glutamine--fructose-6-phosphate aminotransferase [isomerizing]"/>
    <property type="match status" value="1"/>
</dbReference>
<dbReference type="Gene3D" id="3.40.50.10490">
    <property type="entry name" value="Glucose-6-phosphate isomerase like protein, domain 1"/>
    <property type="match status" value="2"/>
</dbReference>
<dbReference type="Gene3D" id="3.60.20.10">
    <property type="entry name" value="Glutamine Phosphoribosylpyrophosphate, subunit 1, domain 1"/>
    <property type="match status" value="1"/>
</dbReference>
<dbReference type="HAMAP" id="MF_00164">
    <property type="entry name" value="GlmS"/>
    <property type="match status" value="1"/>
</dbReference>
<dbReference type="InterPro" id="IPR017932">
    <property type="entry name" value="GATase_2_dom"/>
</dbReference>
<dbReference type="InterPro" id="IPR005855">
    <property type="entry name" value="GFAT"/>
</dbReference>
<dbReference type="InterPro" id="IPR047084">
    <property type="entry name" value="GFAT_N"/>
</dbReference>
<dbReference type="InterPro" id="IPR035466">
    <property type="entry name" value="GlmS/AgaS_SIS"/>
</dbReference>
<dbReference type="InterPro" id="IPR035490">
    <property type="entry name" value="GlmS/FrlB_SIS"/>
</dbReference>
<dbReference type="InterPro" id="IPR029055">
    <property type="entry name" value="Ntn_hydrolases_N"/>
</dbReference>
<dbReference type="InterPro" id="IPR001347">
    <property type="entry name" value="SIS_dom"/>
</dbReference>
<dbReference type="InterPro" id="IPR046348">
    <property type="entry name" value="SIS_dom_sf"/>
</dbReference>
<dbReference type="NCBIfam" id="TIGR01135">
    <property type="entry name" value="glmS"/>
    <property type="match status" value="1"/>
</dbReference>
<dbReference type="NCBIfam" id="NF001484">
    <property type="entry name" value="PRK00331.1"/>
    <property type="match status" value="1"/>
</dbReference>
<dbReference type="PANTHER" id="PTHR10937">
    <property type="entry name" value="GLUCOSAMINE--FRUCTOSE-6-PHOSPHATE AMINOTRANSFERASE, ISOMERIZING"/>
    <property type="match status" value="1"/>
</dbReference>
<dbReference type="PANTHER" id="PTHR10937:SF0">
    <property type="entry name" value="GLUTAMINE--FRUCTOSE-6-PHOSPHATE TRANSAMINASE (ISOMERIZING)"/>
    <property type="match status" value="1"/>
</dbReference>
<dbReference type="Pfam" id="PF13522">
    <property type="entry name" value="GATase_6"/>
    <property type="match status" value="1"/>
</dbReference>
<dbReference type="Pfam" id="PF01380">
    <property type="entry name" value="SIS"/>
    <property type="match status" value="2"/>
</dbReference>
<dbReference type="SUPFAM" id="SSF56235">
    <property type="entry name" value="N-terminal nucleophile aminohydrolases (Ntn hydrolases)"/>
    <property type="match status" value="1"/>
</dbReference>
<dbReference type="SUPFAM" id="SSF53697">
    <property type="entry name" value="SIS domain"/>
    <property type="match status" value="1"/>
</dbReference>
<dbReference type="PROSITE" id="PS51278">
    <property type="entry name" value="GATASE_TYPE_2"/>
    <property type="match status" value="1"/>
</dbReference>
<dbReference type="PROSITE" id="PS51464">
    <property type="entry name" value="SIS"/>
    <property type="match status" value="2"/>
</dbReference>
<name>GLMS_LEIXX</name>
<reference key="1">
    <citation type="journal article" date="2004" name="Mol. Plant Microbe Interact.">
        <title>The genome sequence of the Gram-positive sugarcane pathogen Leifsonia xyli subsp. xyli.</title>
        <authorList>
            <person name="Monteiro-Vitorello C.B."/>
            <person name="Camargo L.E.A."/>
            <person name="Van Sluys M.A."/>
            <person name="Kitajima J.P."/>
            <person name="Truffi D."/>
            <person name="do Amaral A.M."/>
            <person name="Harakava R."/>
            <person name="de Oliveira J.C.F."/>
            <person name="Wood D."/>
            <person name="de Oliveira M.C."/>
            <person name="Miyaki C.Y."/>
            <person name="Takita M.A."/>
            <person name="da Silva A.C.R."/>
            <person name="Furlan L.R."/>
            <person name="Carraro D.M."/>
            <person name="Camarotte G."/>
            <person name="Almeida N.F. Jr."/>
            <person name="Carrer H."/>
            <person name="Coutinho L.L."/>
            <person name="El-Dorry H.A."/>
            <person name="Ferro M.I.T."/>
            <person name="Gagliardi P.R."/>
            <person name="Giglioti E."/>
            <person name="Goldman M.H.S."/>
            <person name="Goldman G.H."/>
            <person name="Kimura E.T."/>
            <person name="Ferro E.S."/>
            <person name="Kuramae E.E."/>
            <person name="Lemos E.G.M."/>
            <person name="Lemos M.V.F."/>
            <person name="Mauro S.M.Z."/>
            <person name="Machado M.A."/>
            <person name="Marino C.L."/>
            <person name="Menck C.F."/>
            <person name="Nunes L.R."/>
            <person name="Oliveira R.C."/>
            <person name="Pereira G.G."/>
            <person name="Siqueira W."/>
            <person name="de Souza A.A."/>
            <person name="Tsai S.M."/>
            <person name="Zanca A.S."/>
            <person name="Simpson A.J.G."/>
            <person name="Brumbley S.M."/>
            <person name="Setubal J.C."/>
        </authorList>
    </citation>
    <scope>NUCLEOTIDE SEQUENCE [LARGE SCALE GENOMIC DNA]</scope>
    <source>
        <strain>CTCB07</strain>
    </source>
</reference>
<sequence length="616" mass="65561">MCGIVGYVGTDKSLEVLLGGLKRLEYRGYDSAGIAVIAPDGSLATAKRAGKLDVLTDELQQHPIPDGGTGIGHTRWATHGGPTDCNAHPHLGDDGRLAVIHNGIIENFATLRDELLAEEFTFESETDTEVAAVLLGREYRAAGSLSEAFQRVVSRLEGAFTLLALHQDQPHVVVGARRNSPLVIGLGEGENFLGSDVAAFVEHTQRALAIGQDQIVTITPEQVTVTDFAGAPVEVEPFDVAWDATAAEKGGWPSFMAKEIAEEPDAVANTLRGRAADGAVHIPELDALGDEFFLGIDQITIVACGTAAYAGLVGSYAIEKWARVPVTVELSHEFRYREPVISGGTLIVSISQSGETMDTLMAVKYAREAGAKAISVCNTQGATIPRESDAALYTHAGPEVAVASTKAFVGQIAALYLFGLSLARVRGTLSAAQQRDAVAELFAVPEKIRAVLESKDTIAQLAHWMSDTRSVLFLGRHVGYPIALEGALKLKELAYIHAEGFAAGELKHGPIALIEPGQPVFVVVPSPRWSDELHKKVVSNIQEIRARGARVIAIAEAGDAAVLPFADEVIRIPLAAPLFEPLLSVIPLQIFAMELAVAKGLDVDQPRNLAKSVTVE</sequence>
<organism>
    <name type="scientific">Leifsonia xyli subsp. xyli (strain CTCB07)</name>
    <dbReference type="NCBI Taxonomy" id="281090"/>
    <lineage>
        <taxon>Bacteria</taxon>
        <taxon>Bacillati</taxon>
        <taxon>Actinomycetota</taxon>
        <taxon>Actinomycetes</taxon>
        <taxon>Micrococcales</taxon>
        <taxon>Microbacteriaceae</taxon>
        <taxon>Leifsonia</taxon>
    </lineage>
</organism>
<feature type="initiator methionine" description="Removed" evidence="1">
    <location>
        <position position="1"/>
    </location>
</feature>
<feature type="chain" id="PRO_0000135348" description="Glutamine--fructose-6-phosphate aminotransferase [isomerizing]">
    <location>
        <begin position="2"/>
        <end position="616"/>
    </location>
</feature>
<feature type="domain" description="Glutamine amidotransferase type-2" evidence="1">
    <location>
        <begin position="2"/>
        <end position="221"/>
    </location>
</feature>
<feature type="domain" description="SIS 1" evidence="1">
    <location>
        <begin position="288"/>
        <end position="428"/>
    </location>
</feature>
<feature type="domain" description="SIS 2" evidence="1">
    <location>
        <begin position="461"/>
        <end position="606"/>
    </location>
</feature>
<feature type="active site" description="Nucleophile; for GATase activity" evidence="1">
    <location>
        <position position="2"/>
    </location>
</feature>
<feature type="active site" description="For Fru-6P isomerization activity" evidence="1">
    <location>
        <position position="611"/>
    </location>
</feature>